<comment type="function">
    <text evidence="1">GPI-anchored cell wall protein involved in cell wall organization, hyphal growth, as well as in host-fungal interaction and virulence.</text>
</comment>
<comment type="subcellular location">
    <subcellularLocation>
        <location evidence="4">Secreted</location>
        <location evidence="4">Cell wall</location>
    </subcellularLocation>
    <subcellularLocation>
        <location evidence="5">Membrane</location>
        <topology evidence="5">Lipid-anchor</topology>
        <topology evidence="5">GPI-anchor</topology>
    </subcellularLocation>
</comment>
<comment type="induction">
    <text evidence="3">Induced in low iron conditions.</text>
</comment>
<comment type="PTM">
    <text>The GPI-anchor is attached to the protein in the endoplasmic reticulum and serves to target the protein to the cell surface. There, the glucosamine-inositol phospholipid moiety is cleaved off and the GPI-modified mannoprotein is covalently attached via its lipidless GPI glycan remnant to the 1,6-beta-glucan of the outer cell wall layer.</text>
</comment>
<comment type="similarity">
    <text evidence="5">Belongs to the HYR1/IFF family.</text>
</comment>
<proteinExistence type="evidence at protein level"/>
<sequence>MQLFQNILVSIALLTQIVFAIEITENKVDRGTVTLNLSDITIYPGASWSIIDNAYTSFVGKLDVRDGAGLYISSTSHLLALQVSLTALLHSITNNGVVSFDSRISRTSSSYDLRGVSFTNNGEMYFAASGEFSSPTALTSASWTNTGLLSFYQNQRTSGTVSLGMPLGSITNTGQVCLNNQVYEQTTQIKGSGCFTANGDSTIYISNVLLAVSPKQNFYLTDKGSSMIVQAVSTTQTFNVYGFGEGNKIGLTIPLMGNLWNSAYAYDTTSGILTLRNLLLEQKFNIGTGYDPSKFQVVTDSGSGIPSTILGSVAYYGRVPERTLPKSCQIPCKPIPEAPGTTPTQYTTTITKTNTAGNTVTESGVVNVSTDKGGSWFTTTSMFPALSTAPSTATVFSSDTIMSTVEPDTTELASLTDIPIETSSVEELLSVMSNWEISSAPTLSIETPVSSHHSSMQHSSFESSADINTVFSSESAFETASDYIVSTPSSISHSTMVPQSSVSALSVVSESLASAEPSFVVPSESFIFSASSAAPQPSSSTYSVSFTTQFETPSSAGPSLVTSVESNTELISSATQSSDIQTEFTSTWTTTNSDGSVVTESGIISQSGTSLTTLTTFQPATSLVVPPYSVIETEFTSTWTTTNSDSSVATESGVVSQSDTLLTTVTTFPPAPSAIVPEFTSPWKINTSIESSETLTVSASSYETVGESLAAATSSYLSSATVVVAPSESEINTSSSILNNEEIASAPVSDTTSIAEHHDGSLSMTTTEFVNSNSLPSSHSIVTATITSCNKSKCSESVVTYVSSVSCATITVGDSEKNISTVGNNVSSIVGDDVSNTQAITMATSTEGATTLTSVSGAKPSVANDATNSVHTTDYTTATTGVQNGSSLSIPSDIPIEISVITPTNSSSSAITIPYENGSNKESIENIKYLALVVFGLMMFM</sequence>
<dbReference type="EMBL" id="CP017630">
    <property type="protein sequence ID" value="AOW31126.1"/>
    <property type="molecule type" value="Genomic_DNA"/>
</dbReference>
<dbReference type="RefSeq" id="XP_717330.2">
    <property type="nucleotide sequence ID" value="XM_712237.2"/>
</dbReference>
<dbReference type="SMR" id="Q5A6U1"/>
<dbReference type="EnsemblFungi" id="CR_03880W_A-T">
    <property type="protein sequence ID" value="CR_03880W_A-T-p1"/>
    <property type="gene ID" value="CR_03880W_A"/>
</dbReference>
<dbReference type="GeneID" id="3641008"/>
<dbReference type="KEGG" id="cal:CAALFM_CR03880WA"/>
<dbReference type="CGD" id="CAL0000178960">
    <property type="gene designation" value="IFF9"/>
</dbReference>
<dbReference type="VEuPathDB" id="FungiDB:CR_03880W_A"/>
<dbReference type="eggNOG" id="KOG1216">
    <property type="taxonomic scope" value="Eukaryota"/>
</dbReference>
<dbReference type="HOGENOM" id="CLU_006199_1_0_1"/>
<dbReference type="InParanoid" id="Q5A6U1"/>
<dbReference type="OrthoDB" id="4022214at2759"/>
<dbReference type="PRO" id="PR:Q5A6U1"/>
<dbReference type="Proteomes" id="UP000000559">
    <property type="component" value="Chromosome R"/>
</dbReference>
<dbReference type="GO" id="GO:0009986">
    <property type="term" value="C:cell surface"/>
    <property type="evidence" value="ECO:0000314"/>
    <property type="project" value="CGD"/>
</dbReference>
<dbReference type="GO" id="GO:0005576">
    <property type="term" value="C:extracellular region"/>
    <property type="evidence" value="ECO:0007669"/>
    <property type="project" value="UniProtKB-KW"/>
</dbReference>
<dbReference type="GO" id="GO:0009277">
    <property type="term" value="C:fungal-type cell wall"/>
    <property type="evidence" value="ECO:0000314"/>
    <property type="project" value="CGD"/>
</dbReference>
<dbReference type="GO" id="GO:0098552">
    <property type="term" value="C:side of membrane"/>
    <property type="evidence" value="ECO:0007669"/>
    <property type="project" value="UniProtKB-KW"/>
</dbReference>
<dbReference type="InterPro" id="IPR031573">
    <property type="entry name" value="Cell_wall_rpt"/>
</dbReference>
<dbReference type="InterPro" id="IPR021031">
    <property type="entry name" value="Hyphal-reg_cell_wall_N"/>
</dbReference>
<dbReference type="Pfam" id="PF11765">
    <property type="entry name" value="Hyphal_reg_CWP"/>
    <property type="match status" value="1"/>
</dbReference>
<dbReference type="Pfam" id="PF15789">
    <property type="entry name" value="Hyr1"/>
    <property type="match status" value="3"/>
</dbReference>
<protein>
    <recommendedName>
        <fullName>Cell wall protein IFF9</fullName>
    </recommendedName>
    <alternativeName>
        <fullName>Adhesin-like protein IFF9</fullName>
    </alternativeName>
</protein>
<reference key="1">
    <citation type="journal article" date="2004" name="Proc. Natl. Acad. Sci. U.S.A.">
        <title>The diploid genome sequence of Candida albicans.</title>
        <authorList>
            <person name="Jones T."/>
            <person name="Federspiel N.A."/>
            <person name="Chibana H."/>
            <person name="Dungan J."/>
            <person name="Kalman S."/>
            <person name="Magee B.B."/>
            <person name="Newport G."/>
            <person name="Thorstenson Y.R."/>
            <person name="Agabian N."/>
            <person name="Magee P.T."/>
            <person name="Davis R.W."/>
            <person name="Scherer S."/>
        </authorList>
    </citation>
    <scope>NUCLEOTIDE SEQUENCE [LARGE SCALE GENOMIC DNA]</scope>
    <source>
        <strain>SC5314 / ATCC MYA-2876</strain>
    </source>
</reference>
<reference key="2">
    <citation type="journal article" date="2007" name="Genome Biol.">
        <title>Assembly of the Candida albicans genome into sixteen supercontigs aligned on the eight chromosomes.</title>
        <authorList>
            <person name="van het Hoog M."/>
            <person name="Rast T.J."/>
            <person name="Martchenko M."/>
            <person name="Grindle S."/>
            <person name="Dignard D."/>
            <person name="Hogues H."/>
            <person name="Cuomo C."/>
            <person name="Berriman M."/>
            <person name="Scherer S."/>
            <person name="Magee B.B."/>
            <person name="Whiteway M."/>
            <person name="Chibana H."/>
            <person name="Nantel A."/>
            <person name="Magee P.T."/>
        </authorList>
    </citation>
    <scope>GENOME REANNOTATION</scope>
    <source>
        <strain>SC5314 / ATCC MYA-2876</strain>
    </source>
</reference>
<reference key="3">
    <citation type="journal article" date="2013" name="Genome Biol.">
        <title>Assembly of a phased diploid Candida albicans genome facilitates allele-specific measurements and provides a simple model for repeat and indel structure.</title>
        <authorList>
            <person name="Muzzey D."/>
            <person name="Schwartz K."/>
            <person name="Weissman J.S."/>
            <person name="Sherlock G."/>
        </authorList>
    </citation>
    <scope>NUCLEOTIDE SEQUENCE [LARGE SCALE GENOMIC DNA]</scope>
    <scope>GENOME REANNOTATION</scope>
    <source>
        <strain>SC5314 / ATCC MYA-2876</strain>
    </source>
</reference>
<reference key="4">
    <citation type="journal article" date="2003" name="Yeast">
        <title>Genome-wide identification of fungal GPI proteins.</title>
        <authorList>
            <person name="De Groot P.W."/>
            <person name="Hellingwerf K.J."/>
            <person name="Klis F.M."/>
        </authorList>
    </citation>
    <scope>PREDICTION OF GPI-ANCHOR</scope>
</reference>
<reference key="5">
    <citation type="journal article" date="2004" name="Mol. Microbiol.">
        <title>Regulatory networks affected by iron availability in Candida albicans.</title>
        <authorList>
            <person name="Lan C.Y."/>
            <person name="Rodarte G."/>
            <person name="Murillo L.A."/>
            <person name="Jones T."/>
            <person name="Davis R.W."/>
            <person name="Dungan J."/>
            <person name="Newport G."/>
            <person name="Agabian N."/>
        </authorList>
    </citation>
    <scope>INDUCTION</scope>
</reference>
<reference key="6">
    <citation type="journal article" date="2007" name="Infect. Immun.">
        <title>Candida albicans Iff11, a secreted protein required for cell wall structure and virulence.</title>
        <authorList>
            <person name="Bates S."/>
            <person name="de la Rosa J.M."/>
            <person name="MacCallum D.M."/>
            <person name="Brown A.J."/>
            <person name="Gow N.A."/>
            <person name="Odds F.C."/>
        </authorList>
    </citation>
    <scope>IDENTIFICATION IN THE HYR1/IFF FAMILY</scope>
</reference>
<reference key="7">
    <citation type="journal article" date="2011" name="Eukaryot. Cell">
        <title>Unexpected role for a serine/threonine-rich domain in the Candida albicans Iff protein family.</title>
        <authorList>
            <person name="Boisrame A."/>
            <person name="Cornu A."/>
            <person name="Da Costa G."/>
            <person name="Richard M.L."/>
        </authorList>
    </citation>
    <scope>SUBCELLULAR LOCATION</scope>
</reference>
<organism>
    <name type="scientific">Candida albicans (strain SC5314 / ATCC MYA-2876)</name>
    <name type="common">Yeast</name>
    <dbReference type="NCBI Taxonomy" id="237561"/>
    <lineage>
        <taxon>Eukaryota</taxon>
        <taxon>Fungi</taxon>
        <taxon>Dikarya</taxon>
        <taxon>Ascomycota</taxon>
        <taxon>Saccharomycotina</taxon>
        <taxon>Pichiomycetes</taxon>
        <taxon>Debaryomycetaceae</taxon>
        <taxon>Candida/Lodderomyces clade</taxon>
        <taxon>Candida</taxon>
    </lineage>
</organism>
<accession>Q5A6U1</accession>
<accession>A0A1D8PSL5</accession>
<accession>Q5A738</accession>
<name>IFF9_CANAL</name>
<keyword id="KW-0134">Cell wall</keyword>
<keyword id="KW-0325">Glycoprotein</keyword>
<keyword id="KW-0336">GPI-anchor</keyword>
<keyword id="KW-0449">Lipoprotein</keyword>
<keyword id="KW-0472">Membrane</keyword>
<keyword id="KW-1185">Reference proteome</keyword>
<keyword id="KW-0964">Secreted</keyword>
<keyword id="KW-0732">Signal</keyword>
<keyword id="KW-0843">Virulence</keyword>
<evidence type="ECO:0000250" key="1"/>
<evidence type="ECO:0000255" key="2"/>
<evidence type="ECO:0000269" key="3">
    <source>
    </source>
</evidence>
<evidence type="ECO:0000269" key="4">
    <source>
    </source>
</evidence>
<evidence type="ECO:0000305" key="5"/>
<feature type="signal peptide" evidence="2">
    <location>
        <begin position="1"/>
        <end position="20"/>
    </location>
</feature>
<feature type="chain" id="PRO_0000424768" description="Cell wall protein IFF9">
    <location>
        <begin position="21"/>
        <end position="917"/>
    </location>
</feature>
<feature type="propeptide" id="PRO_0000424769" description="Removed in mature form" evidence="2">
    <location>
        <begin position="918"/>
        <end position="941"/>
    </location>
</feature>
<feature type="lipid moiety-binding region" description="GPI-anchor amidated asparagine" evidence="2">
    <location>
        <position position="917"/>
    </location>
</feature>
<gene>
    <name type="primary">IFF9</name>
    <name type="ordered locus">CAALFM_CR03880WA</name>
    <name type="ORF">CaO19.465</name>
    <name type="ORF">CaO19.8096</name>
</gene>